<gene>
    <name type="primary">algE</name>
    <name type="synonym">alg76</name>
    <name type="ordered locus">PA3544</name>
</gene>
<reference key="1">
    <citation type="journal article" date="1991" name="Gene">
        <title>Nucleotide sequence and expression of the algE gene involved in alginate biosynthesis by Pseudomonas aeruginosa.</title>
        <authorList>
            <person name="Chu L."/>
            <person name="May T.B."/>
            <person name="Chakrabarty A.M."/>
            <person name="Misra T.K."/>
        </authorList>
    </citation>
    <scope>NUCLEOTIDE SEQUENCE [GENOMIC DNA]</scope>
    <scope>PROTEIN SEQUENCE OF 33-42</scope>
    <source>
        <strain>8830</strain>
    </source>
</reference>
<reference key="2">
    <citation type="journal article" date="2000" name="Nature">
        <title>Complete genome sequence of Pseudomonas aeruginosa PAO1, an opportunistic pathogen.</title>
        <authorList>
            <person name="Stover C.K."/>
            <person name="Pham X.-Q.T."/>
            <person name="Erwin A.L."/>
            <person name="Mizoguchi S.D."/>
            <person name="Warrener P."/>
            <person name="Hickey M.J."/>
            <person name="Brinkman F.S.L."/>
            <person name="Hufnagle W.O."/>
            <person name="Kowalik D.J."/>
            <person name="Lagrou M."/>
            <person name="Garber R.L."/>
            <person name="Goltry L."/>
            <person name="Tolentino E."/>
            <person name="Westbrock-Wadman S."/>
            <person name="Yuan Y."/>
            <person name="Brody L.L."/>
            <person name="Coulter S.N."/>
            <person name="Folger K.R."/>
            <person name="Kas A."/>
            <person name="Larbig K."/>
            <person name="Lim R.M."/>
            <person name="Smith K.A."/>
            <person name="Spencer D.H."/>
            <person name="Wong G.K.-S."/>
            <person name="Wu Z."/>
            <person name="Paulsen I.T."/>
            <person name="Reizer J."/>
            <person name="Saier M.H. Jr."/>
            <person name="Hancock R.E.W."/>
            <person name="Lory S."/>
            <person name="Olson M.V."/>
        </authorList>
    </citation>
    <scope>NUCLEOTIDE SEQUENCE [LARGE SCALE GENOMIC DNA]</scope>
    <source>
        <strain>ATCC 15692 / DSM 22644 / CIP 104116 / JCM 14847 / LMG 12228 / 1C / PRS 101 / PAO1</strain>
    </source>
</reference>
<reference key="3">
    <citation type="journal article" date="1994" name="J. Bacteriol.">
        <title>Overexpression of algE in Escherichia coli: subcellular localization, purification, and ion channel properties.</title>
        <authorList>
            <person name="Rehm B.H."/>
            <person name="Boheim G."/>
            <person name="Tommassen J."/>
            <person name="Winkler U.K."/>
        </authorList>
    </citation>
    <scope>CHARACTERIZATION</scope>
    <source>
        <strain>CF3/M1</strain>
    </source>
</reference>
<dbReference type="EMBL" id="M37181">
    <property type="protein sequence ID" value="AAA25699.1"/>
    <property type="molecule type" value="Genomic_DNA"/>
</dbReference>
<dbReference type="EMBL" id="AE004091">
    <property type="protein sequence ID" value="AAG06932.1"/>
    <property type="molecule type" value="Genomic_DNA"/>
</dbReference>
<dbReference type="PIR" id="E83202">
    <property type="entry name" value="E83202"/>
</dbReference>
<dbReference type="PIR" id="JS0586">
    <property type="entry name" value="JS0586"/>
</dbReference>
<dbReference type="RefSeq" id="NP_252234.1">
    <property type="nucleotide sequence ID" value="NC_002516.2"/>
</dbReference>
<dbReference type="RefSeq" id="WP_003092105.1">
    <property type="nucleotide sequence ID" value="NZ_QZGE01000001.1"/>
</dbReference>
<dbReference type="PDB" id="3RBH">
    <property type="method" value="X-ray"/>
    <property type="resolution" value="2.30 A"/>
    <property type="chains" value="A/B/C/D=33-490"/>
</dbReference>
<dbReference type="PDB" id="4AFK">
    <property type="method" value="X-ray"/>
    <property type="resolution" value="1.90 A"/>
    <property type="chains" value="A=33-490"/>
</dbReference>
<dbReference type="PDB" id="4AZL">
    <property type="method" value="X-ray"/>
    <property type="resolution" value="2.80 A"/>
    <property type="chains" value="A/B=33-490"/>
</dbReference>
<dbReference type="PDB" id="4B61">
    <property type="method" value="X-ray"/>
    <property type="resolution" value="2.40 A"/>
    <property type="chains" value="A/B=33-490"/>
</dbReference>
<dbReference type="PDB" id="4XNK">
    <property type="method" value="X-ray"/>
    <property type="resolution" value="2.80 A"/>
    <property type="chains" value="A=1-490"/>
</dbReference>
<dbReference type="PDB" id="4XNL">
    <property type="method" value="X-ray"/>
    <property type="resolution" value="2.90 A"/>
    <property type="chains" value="A=1-490"/>
</dbReference>
<dbReference type="PDB" id="5D5D">
    <property type="method" value="X-ray"/>
    <property type="resolution" value="2.40 A"/>
    <property type="chains" value="A=1-490"/>
</dbReference>
<dbReference type="PDB" id="5IYU">
    <property type="method" value="X-ray"/>
    <property type="resolution" value="2.70 A"/>
    <property type="chains" value="A=1-490"/>
</dbReference>
<dbReference type="PDB" id="7ACG">
    <property type="method" value="X-ray"/>
    <property type="resolution" value="1.85 A"/>
    <property type="chains" value="A=33-490"/>
</dbReference>
<dbReference type="PDB" id="8PZ4">
    <property type="method" value="X-ray"/>
    <property type="resolution" value="1.77 A"/>
    <property type="chains" value="A=33-490"/>
</dbReference>
<dbReference type="PDB" id="8Q2O">
    <property type="method" value="X-ray"/>
    <property type="resolution" value="1.70 A"/>
    <property type="chains" value="A=33-490"/>
</dbReference>
<dbReference type="PDB" id="8RQP">
    <property type="method" value="X-ray"/>
    <property type="resolution" value="1.45 A"/>
    <property type="chains" value="A=33-490"/>
</dbReference>
<dbReference type="PDBsum" id="3RBH"/>
<dbReference type="PDBsum" id="4AFK"/>
<dbReference type="PDBsum" id="4AZL"/>
<dbReference type="PDBsum" id="4B61"/>
<dbReference type="PDBsum" id="4XNK"/>
<dbReference type="PDBsum" id="4XNL"/>
<dbReference type="PDBsum" id="5D5D"/>
<dbReference type="PDBsum" id="5IYU"/>
<dbReference type="PDBsum" id="7ACG"/>
<dbReference type="PDBsum" id="8PZ4"/>
<dbReference type="PDBsum" id="8Q2O"/>
<dbReference type="PDBsum" id="8RQP"/>
<dbReference type="SMR" id="P18895"/>
<dbReference type="STRING" id="208964.PA3544"/>
<dbReference type="TCDB" id="1.B.13.1.1">
    <property type="family name" value="the alginate export porin (aep) family"/>
</dbReference>
<dbReference type="PaxDb" id="208964-PA3544"/>
<dbReference type="GeneID" id="879838"/>
<dbReference type="KEGG" id="pae:PA3544"/>
<dbReference type="PATRIC" id="fig|208964.12.peg.3708"/>
<dbReference type="PseudoCAP" id="PA3544"/>
<dbReference type="HOGENOM" id="CLU_564755_0_0_6"/>
<dbReference type="InParanoid" id="P18895"/>
<dbReference type="OrthoDB" id="6189846at2"/>
<dbReference type="PhylomeDB" id="P18895"/>
<dbReference type="BioCyc" id="PAER208964:G1FZ6-3612-MONOMER"/>
<dbReference type="UniPathway" id="UPA00286"/>
<dbReference type="EvolutionaryTrace" id="P18895"/>
<dbReference type="Proteomes" id="UP000002438">
    <property type="component" value="Chromosome"/>
</dbReference>
<dbReference type="GO" id="GO:0009279">
    <property type="term" value="C:cell outer membrane"/>
    <property type="evidence" value="ECO:0007669"/>
    <property type="project" value="UniProtKB-SubCell"/>
</dbReference>
<dbReference type="GO" id="GO:0042121">
    <property type="term" value="P:alginic acid biosynthetic process"/>
    <property type="evidence" value="ECO:0000315"/>
    <property type="project" value="PseudoCAP"/>
</dbReference>
<dbReference type="Gene3D" id="2.40.160.100">
    <property type="match status" value="1"/>
</dbReference>
<dbReference type="InterPro" id="IPR025388">
    <property type="entry name" value="Alginate_export_dom"/>
</dbReference>
<dbReference type="InterPro" id="IPR053728">
    <property type="entry name" value="Alginate_Permeability_Chnl"/>
</dbReference>
<dbReference type="Pfam" id="PF13372">
    <property type="entry name" value="Alginate_exp"/>
    <property type="match status" value="1"/>
</dbReference>
<feature type="signal peptide" evidence="2">
    <location>
        <begin position="1"/>
        <end position="32"/>
    </location>
</feature>
<feature type="chain" id="PRO_0000020663" description="Alginate production protein AlgE">
    <location>
        <begin position="33"/>
        <end position="490"/>
    </location>
</feature>
<feature type="region of interest" description="Disordered" evidence="1">
    <location>
        <begin position="102"/>
        <end position="121"/>
    </location>
</feature>
<feature type="region of interest" description="Disordered" evidence="1">
    <location>
        <begin position="331"/>
        <end position="355"/>
    </location>
</feature>
<feature type="compositionally biased region" description="Polar residues" evidence="1">
    <location>
        <begin position="102"/>
        <end position="115"/>
    </location>
</feature>
<feature type="compositionally biased region" description="Polar residues" evidence="1">
    <location>
        <begin position="343"/>
        <end position="355"/>
    </location>
</feature>
<feature type="sequence conflict" description="In Ref. 1; AAA25699." evidence="3" ref="1">
    <original>N</original>
    <variation>G</variation>
    <location>
        <position position="34"/>
    </location>
</feature>
<feature type="strand" evidence="11">
    <location>
        <begin position="41"/>
        <end position="54"/>
    </location>
</feature>
<feature type="turn" evidence="11">
    <location>
        <begin position="56"/>
        <end position="59"/>
    </location>
</feature>
<feature type="strand" evidence="11">
    <location>
        <begin position="60"/>
        <end position="62"/>
    </location>
</feature>
<feature type="strand" evidence="11">
    <location>
        <begin position="66"/>
        <end position="81"/>
    </location>
</feature>
<feature type="strand" evidence="11">
    <location>
        <begin position="84"/>
        <end position="97"/>
    </location>
</feature>
<feature type="strand" evidence="8">
    <location>
        <begin position="102"/>
        <end position="104"/>
    </location>
</feature>
<feature type="helix" evidence="8">
    <location>
        <begin position="105"/>
        <end position="107"/>
    </location>
</feature>
<feature type="helix" evidence="6">
    <location>
        <begin position="117"/>
        <end position="119"/>
    </location>
</feature>
<feature type="strand" evidence="11">
    <location>
        <begin position="123"/>
        <end position="135"/>
    </location>
</feature>
<feature type="strand" evidence="5">
    <location>
        <begin position="138"/>
        <end position="140"/>
    </location>
</feature>
<feature type="strand" evidence="11">
    <location>
        <begin position="144"/>
        <end position="154"/>
    </location>
</feature>
<feature type="strand" evidence="11">
    <location>
        <begin position="158"/>
        <end position="160"/>
    </location>
</feature>
<feature type="strand" evidence="11">
    <location>
        <begin position="162"/>
        <end position="173"/>
    </location>
</feature>
<feature type="strand" evidence="11">
    <location>
        <begin position="175"/>
        <end position="185"/>
    </location>
</feature>
<feature type="strand" evidence="11">
    <location>
        <begin position="191"/>
        <end position="193"/>
    </location>
</feature>
<feature type="turn" evidence="11">
    <location>
        <begin position="199"/>
        <end position="203"/>
    </location>
</feature>
<feature type="strand" evidence="11">
    <location>
        <begin position="204"/>
        <end position="216"/>
    </location>
</feature>
<feature type="strand" evidence="11">
    <location>
        <begin position="219"/>
        <end position="230"/>
    </location>
</feature>
<feature type="strand" evidence="10">
    <location>
        <begin position="243"/>
        <end position="245"/>
    </location>
</feature>
<feature type="strand" evidence="11">
    <location>
        <begin position="247"/>
        <end position="262"/>
    </location>
</feature>
<feature type="strand" evidence="11">
    <location>
        <begin position="270"/>
        <end position="292"/>
    </location>
</feature>
<feature type="turn" evidence="7">
    <location>
        <begin position="293"/>
        <end position="295"/>
    </location>
</feature>
<feature type="strand" evidence="11">
    <location>
        <begin position="297"/>
        <end position="319"/>
    </location>
</feature>
<feature type="strand" evidence="11">
    <location>
        <begin position="321"/>
        <end position="333"/>
    </location>
</feature>
<feature type="helix" evidence="11">
    <location>
        <begin position="338"/>
        <end position="340"/>
    </location>
</feature>
<feature type="strand" evidence="11">
    <location>
        <begin position="358"/>
        <end position="361"/>
    </location>
</feature>
<feature type="turn" evidence="11">
    <location>
        <begin position="368"/>
        <end position="370"/>
    </location>
</feature>
<feature type="strand" evidence="11">
    <location>
        <begin position="374"/>
        <end position="388"/>
    </location>
</feature>
<feature type="turn" evidence="11">
    <location>
        <begin position="389"/>
        <end position="391"/>
    </location>
</feature>
<feature type="strand" evidence="11">
    <location>
        <begin position="392"/>
        <end position="405"/>
    </location>
</feature>
<feature type="strand" evidence="7">
    <location>
        <begin position="406"/>
        <end position="408"/>
    </location>
</feature>
<feature type="strand" evidence="9">
    <location>
        <begin position="412"/>
        <end position="414"/>
    </location>
</feature>
<feature type="strand" evidence="11">
    <location>
        <begin position="425"/>
        <end position="438"/>
    </location>
</feature>
<feature type="strand" evidence="4">
    <location>
        <begin position="439"/>
        <end position="441"/>
    </location>
</feature>
<feature type="helix" evidence="4">
    <location>
        <begin position="448"/>
        <end position="451"/>
    </location>
</feature>
<feature type="strand" evidence="11">
    <location>
        <begin position="455"/>
        <end position="467"/>
    </location>
</feature>
<feature type="helix" evidence="11">
    <location>
        <begin position="469"/>
        <end position="471"/>
    </location>
</feature>
<feature type="strand" evidence="9">
    <location>
        <begin position="473"/>
        <end position="475"/>
    </location>
</feature>
<feature type="strand" evidence="11">
    <location>
        <begin position="479"/>
        <end position="489"/>
    </location>
</feature>
<accession>P18895</accession>
<protein>
    <recommendedName>
        <fullName>Alginate production protein AlgE</fullName>
    </recommendedName>
</protein>
<name>ALGE_PSEAE</name>
<keyword id="KW-0002">3D-structure</keyword>
<keyword id="KW-0016">Alginate biosynthesis</keyword>
<keyword id="KW-0998">Cell outer membrane</keyword>
<keyword id="KW-0903">Direct protein sequencing</keyword>
<keyword id="KW-0472">Membrane</keyword>
<keyword id="KW-1185">Reference proteome</keyword>
<keyword id="KW-0732">Signal</keyword>
<evidence type="ECO:0000256" key="1">
    <source>
        <dbReference type="SAM" id="MobiDB-lite"/>
    </source>
</evidence>
<evidence type="ECO:0000269" key="2">
    <source>
    </source>
</evidence>
<evidence type="ECO:0000305" key="3"/>
<evidence type="ECO:0007829" key="4">
    <source>
        <dbReference type="PDB" id="3RBH"/>
    </source>
</evidence>
<evidence type="ECO:0007829" key="5">
    <source>
        <dbReference type="PDB" id="4AFK"/>
    </source>
</evidence>
<evidence type="ECO:0007829" key="6">
    <source>
        <dbReference type="PDB" id="4B61"/>
    </source>
</evidence>
<evidence type="ECO:0007829" key="7">
    <source>
        <dbReference type="PDB" id="4XNK"/>
    </source>
</evidence>
<evidence type="ECO:0007829" key="8">
    <source>
        <dbReference type="PDB" id="4XNL"/>
    </source>
</evidence>
<evidence type="ECO:0007829" key="9">
    <source>
        <dbReference type="PDB" id="5D5D"/>
    </source>
</evidence>
<evidence type="ECO:0007829" key="10">
    <source>
        <dbReference type="PDB" id="5IYU"/>
    </source>
</evidence>
<evidence type="ECO:0007829" key="11">
    <source>
        <dbReference type="PDB" id="7ACG"/>
    </source>
</evidence>
<sequence length="490" mass="54422">MNSSRSVNPRPSFAPRALSLAIALLLGAPAFAANSGEAPKNFGLDVKITGESENDRDLGTAPGGTLNDIGIDLRPWAFGQWGDWSAYFMGQAVAATDTIETDTLQSDTDDGNNSRNDGREPDKSYLAAREFWVDYAGLTAYPGEHLRFGRQRLREDSGQWQDTNIEALNWSFETTLLNAHAGVAQRFSEYRTDLDELAPEDKDRTHVFGDISTQWAPHHRIGVRIHHADDSGHLRRPGEEVDNLDKTYTGQLTWLGIEATGDAYNYRSSMPLNYWASATWLTGDRDNLTTTTVDDRRIATGKQSGDVNAFGVDLGLRWNIDEQWKAGVGYARGSGGGKDGEEQFQQTGLESNRSNFTGTRSRVHRFGEAFRGELSNLQAATLFGSWQLREDYDASLVYHKFWRVDDDSDIGTSGINAALQPGEKDIGQELDLVVTKYFKQGLLPASMSQYVDEPSALIRFRGGLFKPGDAYGPGTDSTMHRAFVDFIWRF</sequence>
<organism>
    <name type="scientific">Pseudomonas aeruginosa (strain ATCC 15692 / DSM 22644 / CIP 104116 / JCM 14847 / LMG 12228 / 1C / PRS 101 / PAO1)</name>
    <dbReference type="NCBI Taxonomy" id="208964"/>
    <lineage>
        <taxon>Bacteria</taxon>
        <taxon>Pseudomonadati</taxon>
        <taxon>Pseudomonadota</taxon>
        <taxon>Gammaproteobacteria</taxon>
        <taxon>Pseudomonadales</taxon>
        <taxon>Pseudomonadaceae</taxon>
        <taxon>Pseudomonas</taxon>
    </lineage>
</organism>
<proteinExistence type="evidence at protein level"/>
<comment type="function">
    <text>Has non-porin-like, channel-forming properties and probably functions as an alginate permeability pore.</text>
</comment>
<comment type="pathway">
    <text>Glycan biosynthesis; alginate biosynthesis.</text>
</comment>
<comment type="subcellular location">
    <subcellularLocation>
        <location>Cell outer membrane</location>
        <topology>Peripheral membrane protein</topology>
    </subcellularLocation>
</comment>
<comment type="similarity">
    <text evidence="3">Belongs to the AlgE family.</text>
</comment>